<dbReference type="EC" id="4.1.2.40" evidence="1"/>
<dbReference type="EMBL" id="AE017220">
    <property type="protein sequence ID" value="AAX67103.1"/>
    <property type="molecule type" value="Genomic_DNA"/>
</dbReference>
<dbReference type="RefSeq" id="WP_001540954.1">
    <property type="nucleotide sequence ID" value="NC_006905.1"/>
</dbReference>
<dbReference type="SMR" id="Q57JK9"/>
<dbReference type="KEGG" id="sec:SCH_3197"/>
<dbReference type="HOGENOM" id="CLU_040088_0_1_6"/>
<dbReference type="UniPathway" id="UPA00704">
    <property type="reaction ID" value="UER00716"/>
</dbReference>
<dbReference type="Proteomes" id="UP000000538">
    <property type="component" value="Chromosome"/>
</dbReference>
<dbReference type="GO" id="GO:0005829">
    <property type="term" value="C:cytosol"/>
    <property type="evidence" value="ECO:0007669"/>
    <property type="project" value="TreeGrafter"/>
</dbReference>
<dbReference type="GO" id="GO:0009025">
    <property type="term" value="F:tagatose-bisphosphate aldolase activity"/>
    <property type="evidence" value="ECO:0007669"/>
    <property type="project" value="UniProtKB-UniRule"/>
</dbReference>
<dbReference type="GO" id="GO:0008270">
    <property type="term" value="F:zinc ion binding"/>
    <property type="evidence" value="ECO:0007669"/>
    <property type="project" value="UniProtKB-UniRule"/>
</dbReference>
<dbReference type="GO" id="GO:2001059">
    <property type="term" value="P:D-tagatose 6-phosphate catabolic process"/>
    <property type="evidence" value="ECO:0007669"/>
    <property type="project" value="UniProtKB-UniRule"/>
</dbReference>
<dbReference type="GO" id="GO:0019404">
    <property type="term" value="P:galactitol catabolic process"/>
    <property type="evidence" value="ECO:0007669"/>
    <property type="project" value="InterPro"/>
</dbReference>
<dbReference type="CDD" id="cd00947">
    <property type="entry name" value="TBP_aldolase_IIB"/>
    <property type="match status" value="1"/>
</dbReference>
<dbReference type="FunFam" id="3.20.20.70:FF:000043">
    <property type="entry name" value="D-tagatose-1,6-bisphosphate aldolase subunit GatY"/>
    <property type="match status" value="1"/>
</dbReference>
<dbReference type="Gene3D" id="3.20.20.70">
    <property type="entry name" value="Aldolase class I"/>
    <property type="match status" value="1"/>
</dbReference>
<dbReference type="HAMAP" id="MF_01294">
    <property type="entry name" value="TagBP_aldolase_GatY"/>
    <property type="match status" value="1"/>
</dbReference>
<dbReference type="InterPro" id="IPR013785">
    <property type="entry name" value="Aldolase_TIM"/>
</dbReference>
<dbReference type="InterPro" id="IPR050246">
    <property type="entry name" value="Class_II_FBP_aldolase"/>
</dbReference>
<dbReference type="InterPro" id="IPR000771">
    <property type="entry name" value="FBA_II"/>
</dbReference>
<dbReference type="InterPro" id="IPR011288">
    <property type="entry name" value="TagBP_ald_KbaY/GatY"/>
</dbReference>
<dbReference type="InterPro" id="IPR023955">
    <property type="entry name" value="TagBP_aldolase_GatY"/>
</dbReference>
<dbReference type="NCBIfam" id="TIGR00167">
    <property type="entry name" value="cbbA"/>
    <property type="match status" value="1"/>
</dbReference>
<dbReference type="NCBIfam" id="NF006626">
    <property type="entry name" value="PRK09195.1"/>
    <property type="match status" value="1"/>
</dbReference>
<dbReference type="NCBIfam" id="NF009374">
    <property type="entry name" value="PRK12737.1"/>
    <property type="match status" value="1"/>
</dbReference>
<dbReference type="NCBIfam" id="TIGR01858">
    <property type="entry name" value="tag_bisphos_ald"/>
    <property type="match status" value="1"/>
</dbReference>
<dbReference type="PANTHER" id="PTHR30304">
    <property type="entry name" value="D-TAGATOSE-1,6-BISPHOSPHATE ALDOLASE"/>
    <property type="match status" value="1"/>
</dbReference>
<dbReference type="PANTHER" id="PTHR30304:SF0">
    <property type="entry name" value="D-TAGATOSE-1,6-BISPHOSPHATE ALDOLASE SUBUNIT GATY-RELATED"/>
    <property type="match status" value="1"/>
</dbReference>
<dbReference type="Pfam" id="PF01116">
    <property type="entry name" value="F_bP_aldolase"/>
    <property type="match status" value="1"/>
</dbReference>
<dbReference type="PIRSF" id="PIRSF001359">
    <property type="entry name" value="F_bP_aldolase_II"/>
    <property type="match status" value="1"/>
</dbReference>
<dbReference type="SUPFAM" id="SSF51569">
    <property type="entry name" value="Aldolase"/>
    <property type="match status" value="1"/>
</dbReference>
<dbReference type="PROSITE" id="PS00806">
    <property type="entry name" value="ALDOLASE_CLASS_II_2"/>
    <property type="match status" value="1"/>
</dbReference>
<reference key="1">
    <citation type="journal article" date="2005" name="Nucleic Acids Res.">
        <title>The genome sequence of Salmonella enterica serovar Choleraesuis, a highly invasive and resistant zoonotic pathogen.</title>
        <authorList>
            <person name="Chiu C.-H."/>
            <person name="Tang P."/>
            <person name="Chu C."/>
            <person name="Hu S."/>
            <person name="Bao Q."/>
            <person name="Yu J."/>
            <person name="Chou Y.-Y."/>
            <person name="Wang H.-S."/>
            <person name="Lee Y.-S."/>
        </authorList>
    </citation>
    <scope>NUCLEOTIDE SEQUENCE [LARGE SCALE GENOMIC DNA]</scope>
    <source>
        <strain>SC-B67</strain>
    </source>
</reference>
<protein>
    <recommendedName>
        <fullName evidence="1">D-tagatose-1,6-bisphosphate aldolase subunit GatY</fullName>
        <shortName evidence="1">TBPA</shortName>
        <shortName evidence="1">TagBP aldolase</shortName>
        <ecNumber evidence="1">4.1.2.40</ecNumber>
    </recommendedName>
    <alternativeName>
        <fullName evidence="1">D-tagatose-bisphosphate aldolase class II</fullName>
    </alternativeName>
    <alternativeName>
        <fullName evidence="1">Tagatose-bisphosphate aldolase</fullName>
    </alternativeName>
</protein>
<accession>Q57JK9</accession>
<gene>
    <name evidence="1" type="primary">gatY</name>
    <name type="ordered locus">SCH_3197</name>
</gene>
<keyword id="KW-0298">Galactitol metabolism</keyword>
<keyword id="KW-0456">Lyase</keyword>
<keyword id="KW-0479">Metal-binding</keyword>
<keyword id="KW-0862">Zinc</keyword>
<name>GATY_SALCH</name>
<proteinExistence type="inferred from homology"/>
<comment type="function">
    <text evidence="1">Catalytic subunit of the tagatose-1,6-bisphosphate aldolase GatYZ, which catalyzes the reversible aldol condensation of dihydroxyacetone phosphate (DHAP or glycerone-phosphate) with glyceraldehyde 3-phosphate (G3P) to produce tagatose 1,6-bisphosphate (TBP). Requires GatZ subunit for full activity and stability. Is involved in the catabolism of galactitol.</text>
</comment>
<comment type="catalytic activity">
    <reaction evidence="1">
        <text>D-tagatofuranose 1,6-bisphosphate = D-glyceraldehyde 3-phosphate + dihydroxyacetone phosphate</text>
        <dbReference type="Rhea" id="RHEA:22948"/>
        <dbReference type="ChEBI" id="CHEBI:57642"/>
        <dbReference type="ChEBI" id="CHEBI:58694"/>
        <dbReference type="ChEBI" id="CHEBI:59776"/>
        <dbReference type="EC" id="4.1.2.40"/>
    </reaction>
</comment>
<comment type="cofactor">
    <cofactor evidence="1">
        <name>Zn(2+)</name>
        <dbReference type="ChEBI" id="CHEBI:29105"/>
    </cofactor>
    <text evidence="1">Binds 1 zinc ion per subunit.</text>
</comment>
<comment type="pathway">
    <text evidence="1">Carbohydrate metabolism; D-tagatose 6-phosphate degradation; D-glyceraldehyde 3-phosphate and glycerone phosphate from D-tagatose 6-phosphate: step 2/2.</text>
</comment>
<comment type="subunit">
    <text evidence="1">Forms a complex with GatZ.</text>
</comment>
<comment type="similarity">
    <text evidence="1">Belongs to the class II fructose-bisphosphate aldolase family. TagBP aldolase GatY subfamily.</text>
</comment>
<sequence>MFIISGRTMLKKAQQEGYAVPAFNIHNLETLQVVVETAAELRSPLIVAGTPGTFSYAGVGNIVAIAAELAKSWNHPLAVHLDHHEKLADIKMKVAAGVRSVMIDGSHFPFADNIALVKSVVDYCHRYDVSVEAELGRLGGQEDDLIVDGKDALYTHPEQAREFVEKTGIDSLAIAIGTAHGLYTAEPKLDFERLTEIRQRVDVPLVLHGASGLPTRDITRAISLGICKVNVATELKIAFSGALKNYLTQHAEASDPHHYMIPAKAAMKEVVRKVIADCGCEGKL</sequence>
<feature type="chain" id="PRO_0000355343" description="D-tagatose-1,6-bisphosphate aldolase subunit GatY">
    <location>
        <begin position="1"/>
        <end position="284"/>
    </location>
</feature>
<feature type="active site" description="Proton donor" evidence="1">
    <location>
        <position position="82"/>
    </location>
</feature>
<feature type="binding site" evidence="1">
    <location>
        <position position="83"/>
    </location>
    <ligand>
        <name>Zn(2+)</name>
        <dbReference type="ChEBI" id="CHEBI:29105"/>
        <note>catalytic</note>
    </ligand>
</feature>
<feature type="binding site" evidence="1">
    <location>
        <position position="180"/>
    </location>
    <ligand>
        <name>Zn(2+)</name>
        <dbReference type="ChEBI" id="CHEBI:29105"/>
        <note>catalytic</note>
    </ligand>
</feature>
<feature type="binding site" evidence="1">
    <location>
        <position position="181"/>
    </location>
    <ligand>
        <name>dihydroxyacetone phosphate</name>
        <dbReference type="ChEBI" id="CHEBI:57642"/>
    </ligand>
</feature>
<feature type="binding site" evidence="1">
    <location>
        <position position="208"/>
    </location>
    <ligand>
        <name>Zn(2+)</name>
        <dbReference type="ChEBI" id="CHEBI:29105"/>
        <note>catalytic</note>
    </ligand>
</feature>
<feature type="binding site" evidence="1">
    <location>
        <begin position="209"/>
        <end position="211"/>
    </location>
    <ligand>
        <name>dihydroxyacetone phosphate</name>
        <dbReference type="ChEBI" id="CHEBI:57642"/>
    </ligand>
</feature>
<feature type="binding site" evidence="1">
    <location>
        <begin position="230"/>
        <end position="233"/>
    </location>
    <ligand>
        <name>dihydroxyacetone phosphate</name>
        <dbReference type="ChEBI" id="CHEBI:57642"/>
    </ligand>
</feature>
<organism>
    <name type="scientific">Salmonella choleraesuis (strain SC-B67)</name>
    <dbReference type="NCBI Taxonomy" id="321314"/>
    <lineage>
        <taxon>Bacteria</taxon>
        <taxon>Pseudomonadati</taxon>
        <taxon>Pseudomonadota</taxon>
        <taxon>Gammaproteobacteria</taxon>
        <taxon>Enterobacterales</taxon>
        <taxon>Enterobacteriaceae</taxon>
        <taxon>Salmonella</taxon>
    </lineage>
</organism>
<evidence type="ECO:0000255" key="1">
    <source>
        <dbReference type="HAMAP-Rule" id="MF_01294"/>
    </source>
</evidence>